<comment type="function">
    <text evidence="1">Binds to 23S rRNA. Forms part of two intersubunit bridges in the 70S ribosome.</text>
</comment>
<comment type="subunit">
    <text evidence="1">Part of the 50S ribosomal subunit. Forms a cluster with proteins L3 and L19. In the 70S ribosome, L14 and L19 interact and together make contacts with the 16S rRNA in bridges B5 and B8.</text>
</comment>
<comment type="similarity">
    <text evidence="1">Belongs to the universal ribosomal protein uL14 family.</text>
</comment>
<gene>
    <name evidence="1" type="primary">rplN</name>
    <name type="ordered locus">C8J_1601</name>
</gene>
<sequence length="122" mass="13306">MIQSFTRLAVADNSGAKELMCIKVLGGSKRRYATVGDVIVASVKKALPNGKVKKGQVVKAVIVRTKKEIHRDNGSLIRFDENAAVILDNKREPIGTRIFGPVGREVRYGGFMKIVSLAPEVL</sequence>
<name>RL14_CAMJ8</name>
<feature type="chain" id="PRO_1000073420" description="Large ribosomal subunit protein uL14">
    <location>
        <begin position="1"/>
        <end position="122"/>
    </location>
</feature>
<organism>
    <name type="scientific">Campylobacter jejuni subsp. jejuni serotype O:6 (strain 81116 / NCTC 11828)</name>
    <dbReference type="NCBI Taxonomy" id="407148"/>
    <lineage>
        <taxon>Bacteria</taxon>
        <taxon>Pseudomonadati</taxon>
        <taxon>Campylobacterota</taxon>
        <taxon>Epsilonproteobacteria</taxon>
        <taxon>Campylobacterales</taxon>
        <taxon>Campylobacteraceae</taxon>
        <taxon>Campylobacter</taxon>
    </lineage>
</organism>
<protein>
    <recommendedName>
        <fullName evidence="1">Large ribosomal subunit protein uL14</fullName>
    </recommendedName>
    <alternativeName>
        <fullName evidence="2">50S ribosomal protein L14</fullName>
    </alternativeName>
</protein>
<proteinExistence type="inferred from homology"/>
<dbReference type="EMBL" id="CP000814">
    <property type="protein sequence ID" value="ABV53198.1"/>
    <property type="molecule type" value="Genomic_DNA"/>
</dbReference>
<dbReference type="RefSeq" id="WP_002779438.1">
    <property type="nucleotide sequence ID" value="NC_009839.1"/>
</dbReference>
<dbReference type="SMR" id="A8FP11"/>
<dbReference type="GeneID" id="66544933"/>
<dbReference type="KEGG" id="cju:C8J_1601"/>
<dbReference type="HOGENOM" id="CLU_095071_2_1_7"/>
<dbReference type="GO" id="GO:0022625">
    <property type="term" value="C:cytosolic large ribosomal subunit"/>
    <property type="evidence" value="ECO:0007669"/>
    <property type="project" value="TreeGrafter"/>
</dbReference>
<dbReference type="GO" id="GO:0070180">
    <property type="term" value="F:large ribosomal subunit rRNA binding"/>
    <property type="evidence" value="ECO:0007669"/>
    <property type="project" value="TreeGrafter"/>
</dbReference>
<dbReference type="GO" id="GO:0003735">
    <property type="term" value="F:structural constituent of ribosome"/>
    <property type="evidence" value="ECO:0007669"/>
    <property type="project" value="InterPro"/>
</dbReference>
<dbReference type="GO" id="GO:0006412">
    <property type="term" value="P:translation"/>
    <property type="evidence" value="ECO:0007669"/>
    <property type="project" value="UniProtKB-UniRule"/>
</dbReference>
<dbReference type="CDD" id="cd00337">
    <property type="entry name" value="Ribosomal_uL14"/>
    <property type="match status" value="1"/>
</dbReference>
<dbReference type="FunFam" id="2.40.150.20:FF:000001">
    <property type="entry name" value="50S ribosomal protein L14"/>
    <property type="match status" value="1"/>
</dbReference>
<dbReference type="Gene3D" id="2.40.150.20">
    <property type="entry name" value="Ribosomal protein L14"/>
    <property type="match status" value="1"/>
</dbReference>
<dbReference type="HAMAP" id="MF_01367">
    <property type="entry name" value="Ribosomal_uL14"/>
    <property type="match status" value="1"/>
</dbReference>
<dbReference type="InterPro" id="IPR000218">
    <property type="entry name" value="Ribosomal_uL14"/>
</dbReference>
<dbReference type="InterPro" id="IPR005745">
    <property type="entry name" value="Ribosomal_uL14_bac-type"/>
</dbReference>
<dbReference type="InterPro" id="IPR019972">
    <property type="entry name" value="Ribosomal_uL14_CS"/>
</dbReference>
<dbReference type="InterPro" id="IPR036853">
    <property type="entry name" value="Ribosomal_uL14_sf"/>
</dbReference>
<dbReference type="NCBIfam" id="TIGR01067">
    <property type="entry name" value="rplN_bact"/>
    <property type="match status" value="1"/>
</dbReference>
<dbReference type="PANTHER" id="PTHR11761">
    <property type="entry name" value="50S/60S RIBOSOMAL PROTEIN L14/L23"/>
    <property type="match status" value="1"/>
</dbReference>
<dbReference type="PANTHER" id="PTHR11761:SF3">
    <property type="entry name" value="LARGE RIBOSOMAL SUBUNIT PROTEIN UL14M"/>
    <property type="match status" value="1"/>
</dbReference>
<dbReference type="Pfam" id="PF00238">
    <property type="entry name" value="Ribosomal_L14"/>
    <property type="match status" value="1"/>
</dbReference>
<dbReference type="SMART" id="SM01374">
    <property type="entry name" value="Ribosomal_L14"/>
    <property type="match status" value="1"/>
</dbReference>
<dbReference type="SUPFAM" id="SSF50193">
    <property type="entry name" value="Ribosomal protein L14"/>
    <property type="match status" value="1"/>
</dbReference>
<dbReference type="PROSITE" id="PS00049">
    <property type="entry name" value="RIBOSOMAL_L14"/>
    <property type="match status" value="1"/>
</dbReference>
<reference key="1">
    <citation type="journal article" date="2007" name="J. Bacteriol.">
        <title>The complete genome sequence of Campylobacter jejuni strain 81116 (NCTC11828).</title>
        <authorList>
            <person name="Pearson B.M."/>
            <person name="Gaskin D.J.H."/>
            <person name="Segers R.P.A.M."/>
            <person name="Wells J.M."/>
            <person name="Nuijten P.J.M."/>
            <person name="van Vliet A.H.M."/>
        </authorList>
    </citation>
    <scope>NUCLEOTIDE SEQUENCE [LARGE SCALE GENOMIC DNA]</scope>
    <source>
        <strain>81116 / NCTC 11828</strain>
    </source>
</reference>
<accession>A8FP11</accession>
<evidence type="ECO:0000255" key="1">
    <source>
        <dbReference type="HAMAP-Rule" id="MF_01367"/>
    </source>
</evidence>
<evidence type="ECO:0000305" key="2"/>
<keyword id="KW-0687">Ribonucleoprotein</keyword>
<keyword id="KW-0689">Ribosomal protein</keyword>
<keyword id="KW-0694">RNA-binding</keyword>
<keyword id="KW-0699">rRNA-binding</keyword>